<organism>
    <name type="scientific">Gallus gallus</name>
    <name type="common">Chicken</name>
    <dbReference type="NCBI Taxonomy" id="9031"/>
    <lineage>
        <taxon>Eukaryota</taxon>
        <taxon>Metazoa</taxon>
        <taxon>Chordata</taxon>
        <taxon>Craniata</taxon>
        <taxon>Vertebrata</taxon>
        <taxon>Euteleostomi</taxon>
        <taxon>Archelosauria</taxon>
        <taxon>Archosauria</taxon>
        <taxon>Dinosauria</taxon>
        <taxon>Saurischia</taxon>
        <taxon>Theropoda</taxon>
        <taxon>Coelurosauria</taxon>
        <taxon>Aves</taxon>
        <taxon>Neognathae</taxon>
        <taxon>Galloanserae</taxon>
        <taxon>Galliformes</taxon>
        <taxon>Phasianidae</taxon>
        <taxon>Phasianinae</taxon>
        <taxon>Gallus</taxon>
    </lineage>
</organism>
<reference key="1">
    <citation type="journal article" date="2000" name="Immunity">
        <title>BCAP: the tyrosine kinase substrate that connects B cell receptor to phosphoinositide 3-kinase activation.</title>
        <authorList>
            <person name="Okada T."/>
            <person name="Maeda A."/>
            <person name="Iwamatsu A."/>
            <person name="Gotoh K."/>
            <person name="Kurosaki T."/>
        </authorList>
    </citation>
    <scope>NUCLEOTIDE SEQUENCE [MRNA] (ISOFORMS 1 AND 2)</scope>
    <scope>PROTEIN SEQUENCE OF 293-303; 492-505; 560-566; 599-612 AND 614-624</scope>
    <scope>FUNCTION IN B-CELL RECEPTOR SIGNALING</scope>
    <scope>SUBCELLULAR LOCATION</scope>
    <scope>INTERACTION WITH PIK3R1</scope>
    <scope>PHOSPHORYLATION AT TYR-266; TYR-423; TYR-448 AND TYR-463</scope>
    <scope>MUTAGENESIS OF TYR-266; TYR-423; TYR-448 AND TYR-463</scope>
</reference>
<reference key="2">
    <citation type="journal article" date="2002" name="Blood">
        <title>Tyrosine phosphorylation of B-cell adaptor for phosphoinositide 3-kinase is required for Akt activation in response to CD19 engagement.</title>
        <authorList>
            <person name="Inabe K."/>
            <person name="Kurosaki T."/>
        </authorList>
    </citation>
    <scope>FUNCTION</scope>
</reference>
<reference key="3">
    <citation type="journal article" date="2003" name="Biochemistry">
        <title>Implication of phosphatidylinositol 3-kinase membrane recruitment in hydrogen peroxide-induced activation of PI3K and Akt.</title>
        <authorList>
            <person name="Qin S."/>
            <person name="Chock P.B."/>
        </authorList>
    </citation>
    <scope>FUNCTION</scope>
</reference>
<sequence length="800" mass="90156">MTASGTHGGYDVLILYASDAAEWCQYLQNLFLSTRHIRKHHIQSYQLEGESAISDQELDLFNRSRSIIILLSAELVQNFYCPPVLQSLQEALWPPHKVVKLFCGVTDCDDYLTFFKDWYQWQELTYDDEPDAYLEAVKKAISEDSGCDSVTDTETEDEKTSVYSCQLAMNEEHESSKSTGEHLVVQPDHIRCGVQTTVYIIMKCRLDDKVKTEVEFSPENSSSVRVLAELENEYTISVEAPNLTSGTVPLQIYSGDLMVGETSVTYHTDMEEISSLLANAANPVQFMCQAFKIVPYSIEALDKLLTESLKKNIPASGLHLFGINQLEEDDMTTNQRDEELPTLLHFSARYGLKNLTALLLTCPGALQAYSVANKYGHYPNTIAEKHGFKDLRQFIDEYVETADMLKSHIKEELMQGEEDESVYESMAHLSTDLLMKCSLNPGSDEELYESMAGFVPGAPEDLYVEMLQSKPDTPISGDEISLTVKDSMLRKFLEGGSTDAPDSGEGVSQQYGEDLYYSVEKDTFPQEMASRPPVPVPRPESSSPQPDNELYISKVFAQKAQRPENLYVPRGKVRKETIVRPVRDLSQSSIYDPFAGMKTPGQRQLITLQEQVKMGILNVDEAVLHFKEWQLNQKKRSESFRFQQENLKRLRDSITRRQMEKQKSGKSADLEITVPIRRSHNTLGKPECGIYEYAPRKNIFPPKKELKRGDWKTESTSSTTSSASNRSSTRSILSVSSGMEGDSEDNEVSEASRSRSPIPSQAERLPLPLPERPPRVPPRGASRPVNCEGFYPPPVPPRGR</sequence>
<gene>
    <name type="primary">PIK3AP1</name>
    <name type="synonym">BCAP</name>
</gene>
<protein>
    <recommendedName>
        <fullName>Phosphoinositide 3-kinase adapter protein 1</fullName>
    </recommendedName>
    <alternativeName>
        <fullName>B-cell adapter for phosphoinositide 3-kinase</fullName>
    </alternativeName>
    <alternativeName>
        <fullName>B-cell phosphoinositide 3-kinase adapter protein 1</fullName>
    </alternativeName>
</protein>
<proteinExistence type="evidence at protein level"/>
<name>BCAP_CHICK</name>
<evidence type="ECO:0000250" key="1"/>
<evidence type="ECO:0000255" key="2"/>
<evidence type="ECO:0000255" key="3">
    <source>
        <dbReference type="PROSITE-ProRule" id="PRU00204"/>
    </source>
</evidence>
<evidence type="ECO:0000255" key="4">
    <source>
        <dbReference type="PROSITE-ProRule" id="PRU00707"/>
    </source>
</evidence>
<evidence type="ECO:0000256" key="5">
    <source>
        <dbReference type="SAM" id="MobiDB-lite"/>
    </source>
</evidence>
<evidence type="ECO:0000269" key="6">
    <source>
    </source>
</evidence>
<evidence type="ECO:0000269" key="7">
    <source>
    </source>
</evidence>
<evidence type="ECO:0000269" key="8">
    <source>
    </source>
</evidence>
<evidence type="ECO:0000303" key="9">
    <source>
    </source>
</evidence>
<evidence type="ECO:0000305" key="10"/>
<evidence type="ECO:0000305" key="11">
    <source>
    </source>
</evidence>
<keyword id="KW-0025">Alternative splicing</keyword>
<keyword id="KW-1003">Cell membrane</keyword>
<keyword id="KW-0175">Coiled coil</keyword>
<keyword id="KW-0963">Cytoplasm</keyword>
<keyword id="KW-0903">Direct protein sequencing</keyword>
<keyword id="KW-0472">Membrane</keyword>
<keyword id="KW-0597">Phosphoprotein</keyword>
<keyword id="KW-1185">Reference proteome</keyword>
<dbReference type="EMBL" id="AF293805">
    <property type="protein sequence ID" value="AAG48583.1"/>
    <property type="molecule type" value="mRNA"/>
</dbReference>
<dbReference type="EMBL" id="AF315784">
    <property type="protein sequence ID" value="AAG48619.1"/>
    <property type="molecule type" value="mRNA"/>
</dbReference>
<dbReference type="RefSeq" id="NP_989681.1">
    <molecule id="Q9DDT2-1"/>
    <property type="nucleotide sequence ID" value="NM_204350.2"/>
</dbReference>
<dbReference type="RefSeq" id="XP_046775754.1">
    <molecule id="Q9DDT2-2"/>
    <property type="nucleotide sequence ID" value="XM_046919798.1"/>
</dbReference>
<dbReference type="RefSeq" id="XP_046775755.1">
    <molecule id="Q9DDT2-2"/>
    <property type="nucleotide sequence ID" value="XM_046919799.1"/>
</dbReference>
<dbReference type="RefSeq" id="XP_046798652.1">
    <molecule id="Q9DDT2-2"/>
    <property type="nucleotide sequence ID" value="XM_046942696.1"/>
</dbReference>
<dbReference type="RefSeq" id="XP_046798653.1">
    <molecule id="Q9DDT2-2"/>
    <property type="nucleotide sequence ID" value="XM_046942697.1"/>
</dbReference>
<dbReference type="SMR" id="Q9DDT2"/>
<dbReference type="BioGRID" id="675276">
    <property type="interactions" value="1"/>
</dbReference>
<dbReference type="FunCoup" id="Q9DDT2">
    <property type="interactions" value="31"/>
</dbReference>
<dbReference type="STRING" id="9031.ENSGALP00000008882"/>
<dbReference type="iPTMnet" id="Q9DDT2"/>
<dbReference type="PaxDb" id="9031-ENSGALP00000008882"/>
<dbReference type="Ensembl" id="ENSGALT00010058144.1">
    <molecule id="Q9DDT2-2"/>
    <property type="protein sequence ID" value="ENSGALP00010035305.1"/>
    <property type="gene ID" value="ENSGALG00010023847.1"/>
</dbReference>
<dbReference type="GeneID" id="374268"/>
<dbReference type="KEGG" id="gga:374268"/>
<dbReference type="CTD" id="118788"/>
<dbReference type="VEuPathDB" id="HostDB:geneid_374268"/>
<dbReference type="eggNOG" id="ENOG502QS94">
    <property type="taxonomic scope" value="Eukaryota"/>
</dbReference>
<dbReference type="GeneTree" id="ENSGT00390000008787"/>
<dbReference type="HOGENOM" id="CLU_012993_0_0_1"/>
<dbReference type="InParanoid" id="Q9DDT2"/>
<dbReference type="OMA" id="YYTSMGE"/>
<dbReference type="OrthoDB" id="8192811at2759"/>
<dbReference type="PhylomeDB" id="Q9DDT2"/>
<dbReference type="Reactome" id="R-GGA-1257604">
    <property type="pathway name" value="PIP3 activates AKT signaling"/>
</dbReference>
<dbReference type="Reactome" id="R-GGA-6811558">
    <property type="pathway name" value="PI5P, PP2A and IER3 Regulate PI3K/AKT Signaling"/>
</dbReference>
<dbReference type="Reactome" id="R-GGA-983695">
    <property type="pathway name" value="Antigen activates B Cell Receptor (BCR) leading to generation of second messengers"/>
</dbReference>
<dbReference type="PRO" id="PR:Q9DDT2"/>
<dbReference type="Proteomes" id="UP000000539">
    <property type="component" value="Chromosome 6"/>
</dbReference>
<dbReference type="Bgee" id="ENSGALG00000005547">
    <property type="expression patterns" value="Expressed in spleen and 13 other cell types or tissues"/>
</dbReference>
<dbReference type="GO" id="GO:0005829">
    <property type="term" value="C:cytosol"/>
    <property type="evidence" value="ECO:0000250"/>
    <property type="project" value="UniProtKB"/>
</dbReference>
<dbReference type="GO" id="GO:0016020">
    <property type="term" value="C:membrane"/>
    <property type="evidence" value="ECO:0000250"/>
    <property type="project" value="UniProtKB"/>
</dbReference>
<dbReference type="GO" id="GO:0005886">
    <property type="term" value="C:plasma membrane"/>
    <property type="evidence" value="ECO:0000304"/>
    <property type="project" value="Reactome"/>
</dbReference>
<dbReference type="GO" id="GO:0036312">
    <property type="term" value="F:phosphatidylinositol 3-kinase regulatory subunit binding"/>
    <property type="evidence" value="ECO:0000250"/>
    <property type="project" value="UniProtKB"/>
</dbReference>
<dbReference type="GO" id="GO:0005102">
    <property type="term" value="F:signaling receptor binding"/>
    <property type="evidence" value="ECO:0000318"/>
    <property type="project" value="GO_Central"/>
</dbReference>
<dbReference type="GO" id="GO:0032869">
    <property type="term" value="P:cellular response to insulin stimulus"/>
    <property type="evidence" value="ECO:0000315"/>
    <property type="project" value="BHF-UCL"/>
</dbReference>
<dbReference type="GO" id="GO:0051897">
    <property type="term" value="P:positive regulation of phosphatidylinositol 3-kinase/protein kinase B signal transduction"/>
    <property type="evidence" value="ECO:0000250"/>
    <property type="project" value="UniProtKB"/>
</dbReference>
<dbReference type="GO" id="GO:0050727">
    <property type="term" value="P:regulation of inflammatory response"/>
    <property type="evidence" value="ECO:0000250"/>
    <property type="project" value="UniProtKB"/>
</dbReference>
<dbReference type="GO" id="GO:0034134">
    <property type="term" value="P:toll-like receptor 2 signaling pathway"/>
    <property type="evidence" value="ECO:0000250"/>
    <property type="project" value="UniProtKB"/>
</dbReference>
<dbReference type="GO" id="GO:0034142">
    <property type="term" value="P:toll-like receptor 4 signaling pathway"/>
    <property type="evidence" value="ECO:0000250"/>
    <property type="project" value="UniProtKB"/>
</dbReference>
<dbReference type="GO" id="GO:0034154">
    <property type="term" value="P:toll-like receptor 7 signaling pathway"/>
    <property type="evidence" value="ECO:0000250"/>
    <property type="project" value="UniProtKB"/>
</dbReference>
<dbReference type="GO" id="GO:0034162">
    <property type="term" value="P:toll-like receptor 9 signaling pathway"/>
    <property type="evidence" value="ECO:0000250"/>
    <property type="project" value="UniProtKB"/>
</dbReference>
<dbReference type="GO" id="GO:0031929">
    <property type="term" value="P:TOR signaling"/>
    <property type="evidence" value="ECO:0000315"/>
    <property type="project" value="BHF-UCL"/>
</dbReference>
<dbReference type="FunFam" id="3.40.50.10140:FF:000010">
    <property type="entry name" value="phosphoinositide 3-kinase adapter protein 1"/>
    <property type="match status" value="1"/>
</dbReference>
<dbReference type="Gene3D" id="3.40.50.10140">
    <property type="entry name" value="Toll/interleukin-1 receptor homology (TIR) domain"/>
    <property type="match status" value="1"/>
</dbReference>
<dbReference type="InterPro" id="IPR052446">
    <property type="entry name" value="B-cell_PI3K-Signaling_Adptrs"/>
</dbReference>
<dbReference type="InterPro" id="IPR017893">
    <property type="entry name" value="DBB_domain"/>
</dbReference>
<dbReference type="InterPro" id="IPR041340">
    <property type="entry name" value="PIK3AP1_TIR"/>
</dbReference>
<dbReference type="InterPro" id="IPR000157">
    <property type="entry name" value="TIR_dom"/>
</dbReference>
<dbReference type="InterPro" id="IPR035897">
    <property type="entry name" value="Toll_tir_struct_dom_sf"/>
</dbReference>
<dbReference type="PANTHER" id="PTHR16267">
    <property type="entry name" value="BANK1/PIK3AP1 FAMILY MEMBER"/>
    <property type="match status" value="1"/>
</dbReference>
<dbReference type="PANTHER" id="PTHR16267:SF12">
    <property type="entry name" value="PHOSPHOINOSITIDE 3-KINASE ADAPTER PROTEIN 1"/>
    <property type="match status" value="1"/>
</dbReference>
<dbReference type="Pfam" id="PF14545">
    <property type="entry name" value="DBB"/>
    <property type="match status" value="1"/>
</dbReference>
<dbReference type="Pfam" id="PF18567">
    <property type="entry name" value="TIR_3"/>
    <property type="match status" value="1"/>
</dbReference>
<dbReference type="SMART" id="SM01282">
    <property type="entry name" value="DBB"/>
    <property type="match status" value="1"/>
</dbReference>
<dbReference type="SUPFAM" id="SSF52200">
    <property type="entry name" value="Toll/Interleukin receptor TIR domain"/>
    <property type="match status" value="1"/>
</dbReference>
<dbReference type="PROSITE" id="PS51376">
    <property type="entry name" value="DBB"/>
    <property type="match status" value="1"/>
</dbReference>
<dbReference type="PROSITE" id="PS50104">
    <property type="entry name" value="TIR"/>
    <property type="match status" value="1"/>
</dbReference>
<comment type="function">
    <text evidence="6 7 8">Signaling adapter that contributes to B-cell development by linking B-cell receptor (BCR) signaling to the phosphoinositide 3-kinase (PI3K)-Akt signaling pathway. Has a complementary role to the BCR coreceptor CD19, coupling BCR and PI3K activation by providing a docking site for the PI3K subunit PIK3R1. Alternatively, links Toll-like receptor (TLR) signaling to PI3K activation, a process preventing excessive inflammatory cytokine production. Also involved in the activation of PI3K in natural killer cells. May be involved in the survival of mature B-cells via activation of REL.</text>
</comment>
<comment type="subunit">
    <text evidence="1 6">Homooligomer (By similarity). Interacts (phosphorylated on tyrosine residues within YXXM motifs) with PIK3R1 (via SH2 domain); required for BCR- and TLR-mediated activation of phosphoinositide 3-kinase.</text>
</comment>
<comment type="subcellular location">
    <subcellularLocation>
        <location evidence="6">Cytoplasm</location>
    </subcellularLocation>
    <subcellularLocation>
        <location evidence="11">Cell membrane</location>
        <topology evidence="11">Peripheral membrane protein</topology>
    </subcellularLocation>
</comment>
<comment type="alternative products">
    <event type="alternative splicing"/>
    <isoform>
        <id>Q9DDT2-1</id>
        <name>1</name>
        <sequence type="displayed"/>
    </isoform>
    <isoform>
        <id>Q9DDT2-2</id>
        <name>2</name>
        <sequence type="described" ref="VSP_034244"/>
    </isoform>
</comment>
<comment type="domain">
    <text evidence="1">The DBB domain is required for dimerization.</text>
</comment>
<comment type="PTM">
    <text evidence="1 6">Constitutively phosphorylated (By similarity). Phosphorylated on tyrosine residues within the YXXM motifs by BTK and SYK. Isoform 1 and isoform 2 are phosphorylated on tyrosine residues, most likely within the YXXM motifs, via CD19 activation.</text>
</comment>
<comment type="miscellaneous">
    <molecule>Isoform 2</molecule>
    <text evidence="10">It is unsure whether this isoform is produced by alternative splicing or alternative initiation.</text>
</comment>
<accession>Q9DDT2</accession>
<accession>Q9DDL3</accession>
<feature type="chain" id="PRO_0000341275" description="Phosphoinositide 3-kinase adapter protein 1">
    <location>
        <begin position="1"/>
        <end position="800"/>
    </location>
</feature>
<feature type="domain" description="TIR" evidence="3">
    <location>
        <begin position="8"/>
        <end position="145"/>
    </location>
</feature>
<feature type="domain" description="DBB" evidence="4">
    <location>
        <begin position="185"/>
        <end position="321"/>
    </location>
</feature>
<feature type="region of interest" description="Necessary and sufficient to mediate inhibition of NF-kappa-B downstream of activated TLRs" evidence="1">
    <location>
        <begin position="10"/>
        <end position="144"/>
    </location>
</feature>
<feature type="region of interest" description="Disordered" evidence="5">
    <location>
        <begin position="527"/>
        <end position="548"/>
    </location>
</feature>
<feature type="region of interest" description="Disordered" evidence="5">
    <location>
        <begin position="702"/>
        <end position="800"/>
    </location>
</feature>
<feature type="coiled-coil region" evidence="2">
    <location>
        <begin position="643"/>
        <end position="663"/>
    </location>
</feature>
<feature type="compositionally biased region" description="Basic and acidic residues" evidence="5">
    <location>
        <begin position="702"/>
        <end position="713"/>
    </location>
</feature>
<feature type="compositionally biased region" description="Low complexity" evidence="5">
    <location>
        <begin position="714"/>
        <end position="737"/>
    </location>
</feature>
<feature type="compositionally biased region" description="Polar residues" evidence="5">
    <location>
        <begin position="749"/>
        <end position="759"/>
    </location>
</feature>
<feature type="compositionally biased region" description="Pro residues" evidence="5">
    <location>
        <begin position="767"/>
        <end position="777"/>
    </location>
</feature>
<feature type="compositionally biased region" description="Pro residues" evidence="5">
    <location>
        <begin position="791"/>
        <end position="800"/>
    </location>
</feature>
<feature type="modified residue" description="Phosphotyrosine" evidence="6">
    <location>
        <position position="266"/>
    </location>
</feature>
<feature type="modified residue" description="Phosphotyrosine; by SYK" evidence="11">
    <location>
        <position position="423"/>
    </location>
</feature>
<feature type="modified residue" description="Phosphotyrosine; by SYK" evidence="11">
    <location>
        <position position="448"/>
    </location>
</feature>
<feature type="modified residue" description="Phosphotyrosine; by SYK" evidence="11">
    <location>
        <position position="463"/>
    </location>
</feature>
<feature type="splice variant" id="VSP_034244" description="In isoform 2." evidence="9">
    <location>
        <begin position="1"/>
        <end position="168"/>
    </location>
</feature>
<feature type="mutagenesis site" description="Fails to bind PIK3R1 in a BCR-signaling dependent manner; when associated with Y-423; Y-448 and Y-463." evidence="6">
    <original>Y</original>
    <variation>F</variation>
    <location>
        <position position="266"/>
    </location>
</feature>
<feature type="mutagenesis site" description="Fails to bind PIK3R1 in a BCR-signaling dependent manner; when associated with Y-266; Y-448 and Y-463." evidence="6">
    <original>Y</original>
    <variation>F</variation>
    <location>
        <position position="423"/>
    </location>
</feature>
<feature type="mutagenesis site" description="Fails to bind PIK3R1 in a BCR-signaling dependent manner; when associated with Y-266; Y-423 and Y-463." evidence="6">
    <original>Y</original>
    <variation>F</variation>
    <location>
        <position position="448"/>
    </location>
</feature>
<feature type="mutagenesis site" description="Fails to bind PIK3R1 in a BCR-signaling dependent manner; when associated with Y-266; Y-423 and Y-448." evidence="6">
    <original>Y</original>
    <variation>F</variation>
    <location>
        <position position="463"/>
    </location>
</feature>